<gene>
    <name type="ORF">ORF3b</name>
</gene>
<feature type="chain" id="PRO_0000083204" description="Capsid protein">
    <location>
        <begin position="1"/>
        <end position="218"/>
    </location>
</feature>
<feature type="region of interest" description="Disordered" evidence="2">
    <location>
        <begin position="1"/>
        <end position="28"/>
    </location>
</feature>
<feature type="compositionally biased region" description="Basic residues" evidence="2">
    <location>
        <begin position="11"/>
        <end position="21"/>
    </location>
</feature>
<feature type="helix" evidence="4">
    <location>
        <begin position="32"/>
        <end position="47"/>
    </location>
</feature>
<feature type="strand" evidence="4">
    <location>
        <begin position="55"/>
        <end position="58"/>
    </location>
</feature>
<feature type="strand" evidence="4">
    <location>
        <begin position="72"/>
        <end position="75"/>
    </location>
</feature>
<feature type="strand" evidence="4">
    <location>
        <begin position="85"/>
        <end position="89"/>
    </location>
</feature>
<feature type="helix" evidence="4">
    <location>
        <begin position="94"/>
        <end position="97"/>
    </location>
</feature>
<feature type="turn" evidence="4">
    <location>
        <begin position="98"/>
        <end position="101"/>
    </location>
</feature>
<feature type="strand" evidence="4">
    <location>
        <begin position="102"/>
        <end position="113"/>
    </location>
</feature>
<feature type="strand" evidence="4">
    <location>
        <begin position="121"/>
        <end position="127"/>
    </location>
</feature>
<feature type="turn" evidence="4">
    <location>
        <begin position="129"/>
        <end position="131"/>
    </location>
</feature>
<feature type="helix" evidence="4">
    <location>
        <begin position="139"/>
        <end position="144"/>
    </location>
</feature>
<feature type="strand" evidence="4">
    <location>
        <begin position="151"/>
        <end position="153"/>
    </location>
</feature>
<feature type="turn" evidence="4">
    <location>
        <begin position="158"/>
        <end position="160"/>
    </location>
</feature>
<feature type="helix" evidence="4">
    <location>
        <begin position="170"/>
        <end position="173"/>
    </location>
</feature>
<feature type="helix" evidence="4">
    <location>
        <begin position="177"/>
        <end position="180"/>
    </location>
</feature>
<feature type="strand" evidence="4">
    <location>
        <begin position="183"/>
        <end position="188"/>
    </location>
</feature>
<feature type="strand" evidence="4">
    <location>
        <begin position="198"/>
        <end position="208"/>
    </location>
</feature>
<comment type="function">
    <text evidence="1">Capsid protein. Probably binds RNA and plays a role in packaging (By similarity).</text>
</comment>
<comment type="subcellular location">
    <subcellularLocation>
        <location evidence="3">Virion</location>
    </subcellularLocation>
</comment>
<comment type="domain">
    <text evidence="1">The N-terminal arginine-rich stretch does not seem to be the major RNA-binding region that allows formation of an infectious ribonucleoprotein complex.</text>
</comment>
<comment type="similarity">
    <text evidence="3">Belongs to the cucumovirus capsid protein family.</text>
</comment>
<accession>P69466</accession>
<accession>P14767</accession>
<name>CAPSD_CMVFN</name>
<keyword id="KW-0002">3D-structure</keyword>
<keyword id="KW-0167">Capsid protein</keyword>
<keyword id="KW-1185">Reference proteome</keyword>
<keyword id="KW-1142">T=3 icosahedral capsid protein</keyword>
<keyword id="KW-0946">Virion</keyword>
<organismHost>
    <name type="scientific">Cucurbita pepo</name>
    <name type="common">Vegetable marrow</name>
    <name type="synonym">Summer squash</name>
    <dbReference type="NCBI Taxonomy" id="3663"/>
</organismHost>
<organismHost>
    <name type="scientific">Nicotiana tabacum</name>
    <name type="common">Common tobacco</name>
    <dbReference type="NCBI Taxonomy" id="4097"/>
</organismHost>
<organism>
    <name type="scientific">Cucumber mosaic virus (strain FNY)</name>
    <name type="common">CMV</name>
    <dbReference type="NCBI Taxonomy" id="12307"/>
    <lineage>
        <taxon>Viruses</taxon>
        <taxon>Riboviria</taxon>
        <taxon>Orthornavirae</taxon>
        <taxon>Kitrinoviricota</taxon>
        <taxon>Alsuviricetes</taxon>
        <taxon>Martellivirales</taxon>
        <taxon>Bromoviridae</taxon>
        <taxon>Cucumovirus</taxon>
        <taxon>Cucumber mosaic virus</taxon>
    </lineage>
</organism>
<sequence length="218" mass="24141">MDKSESTSAGRNRRRRPRRGSRSAPSSADANFRVLSQQLSRLNKTLAAGRPTINHPTFVGSERCRPGYTFTSITLKPPKIDRGSYYGKRLLLPDSVTEYDKKLVSRIQIRVNPLPKFDSTVWVTVRKVPASSDLSVAAISAMFADGASPVLVYQYAASGVQANNKLLYDLSAMRADIGDMRKYAVLVYSKDDALETDELVLHVDIEHQRIPTSGVLPV</sequence>
<reference key="1">
    <citation type="journal article" date="1990" name="J. Gen. Virol.">
        <title>Nucleotide sequence and evolutionary relationships of cucumber mosaic virus (CMV) strains: CMV RNA 3.</title>
        <authorList>
            <person name="Owen J."/>
            <person name="Shintaku M."/>
            <person name="Aeschleman P."/>
            <person name="Tahar S."/>
            <person name="Palukaitis P."/>
        </authorList>
    </citation>
    <scope>NUCLEOTIDE SEQUENCE [GENOMIC RNA]</scope>
</reference>
<reference key="2">
    <citation type="journal article" date="2000" name="J. Virol.">
        <title>The structure of cucumber mosaic virus and comparison to cowpea chlorotic mottle virus.</title>
        <authorList>
            <person name="Smith T.J."/>
            <person name="Chase E."/>
            <person name="Schmidt T."/>
            <person name="Perry K.L."/>
        </authorList>
    </citation>
    <scope>X-RAY CRYSTALLOGRAPHY (3.2 ANGSTROMS)</scope>
</reference>
<evidence type="ECO:0000250" key="1"/>
<evidence type="ECO:0000256" key="2">
    <source>
        <dbReference type="SAM" id="MobiDB-lite"/>
    </source>
</evidence>
<evidence type="ECO:0000305" key="3"/>
<evidence type="ECO:0007829" key="4">
    <source>
        <dbReference type="PDB" id="1F15"/>
    </source>
</evidence>
<protein>
    <recommendedName>
        <fullName>Capsid protein</fullName>
        <shortName>CP</shortName>
    </recommendedName>
    <alternativeName>
        <fullName>Coat protein</fullName>
    </alternativeName>
</protein>
<proteinExistence type="evidence at protein level"/>
<dbReference type="EMBL" id="D10538">
    <property type="protein sequence ID" value="BAA01397.1"/>
    <property type="molecule type" value="Genomic_RNA"/>
</dbReference>
<dbReference type="PDB" id="1F15">
    <property type="method" value="X-ray"/>
    <property type="resolution" value="3.20 A"/>
    <property type="chains" value="A/B/C=1-218"/>
</dbReference>
<dbReference type="PDBsum" id="1F15"/>
<dbReference type="SMR" id="P69466"/>
<dbReference type="KEGG" id="vg:962640"/>
<dbReference type="EvolutionaryTrace" id="P69466"/>
<dbReference type="Proteomes" id="UP000002502">
    <property type="component" value="Genome"/>
</dbReference>
<dbReference type="GO" id="GO:0039617">
    <property type="term" value="C:T=3 icosahedral viral capsid"/>
    <property type="evidence" value="ECO:0007669"/>
    <property type="project" value="UniProtKB-KW"/>
</dbReference>
<dbReference type="GO" id="GO:0005198">
    <property type="term" value="F:structural molecule activity"/>
    <property type="evidence" value="ECO:0007669"/>
    <property type="project" value="InterPro"/>
</dbReference>
<dbReference type="Gene3D" id="2.60.120.530">
    <property type="entry name" value="Cucumovirus coat protein, subunit A"/>
    <property type="match status" value="1"/>
</dbReference>
<dbReference type="InterPro" id="IPR000247">
    <property type="entry name" value="Cucumovirus_coat"/>
</dbReference>
<dbReference type="InterPro" id="IPR037137">
    <property type="entry name" value="Cucumovirus_coat_Asu_sf"/>
</dbReference>
<dbReference type="Pfam" id="PF00760">
    <property type="entry name" value="Cucumo_coat"/>
    <property type="match status" value="1"/>
</dbReference>
<dbReference type="PRINTS" id="PR00222">
    <property type="entry name" value="CUCUMOCOAT"/>
</dbReference>
<dbReference type="SUPFAM" id="SSF88633">
    <property type="entry name" value="Positive stranded ssRNA viruses"/>
    <property type="match status" value="1"/>
</dbReference>